<organism>
    <name type="scientific">Pseudomonas fluorescens (strain ATCC BAA-477 / NRRL B-23932 / Pf-5)</name>
    <dbReference type="NCBI Taxonomy" id="220664"/>
    <lineage>
        <taxon>Bacteria</taxon>
        <taxon>Pseudomonadati</taxon>
        <taxon>Pseudomonadota</taxon>
        <taxon>Gammaproteobacteria</taxon>
        <taxon>Pseudomonadales</taxon>
        <taxon>Pseudomonadaceae</taxon>
        <taxon>Pseudomonas</taxon>
    </lineage>
</organism>
<accession>Q4KC87</accession>
<reference key="1">
    <citation type="journal article" date="2005" name="Nat. Biotechnol.">
        <title>Complete genome sequence of the plant commensal Pseudomonas fluorescens Pf-5.</title>
        <authorList>
            <person name="Paulsen I.T."/>
            <person name="Press C.M."/>
            <person name="Ravel J."/>
            <person name="Kobayashi D.Y."/>
            <person name="Myers G.S.A."/>
            <person name="Mavrodi D.V."/>
            <person name="DeBoy R.T."/>
            <person name="Seshadri R."/>
            <person name="Ren Q."/>
            <person name="Madupu R."/>
            <person name="Dodson R.J."/>
            <person name="Durkin A.S."/>
            <person name="Brinkac L.M."/>
            <person name="Daugherty S.C."/>
            <person name="Sullivan S.A."/>
            <person name="Rosovitz M.J."/>
            <person name="Gwinn M.L."/>
            <person name="Zhou L."/>
            <person name="Schneider D.J."/>
            <person name="Cartinhour S.W."/>
            <person name="Nelson W.C."/>
            <person name="Weidman J."/>
            <person name="Watkins K."/>
            <person name="Tran K."/>
            <person name="Khouri H."/>
            <person name="Pierson E.A."/>
            <person name="Pierson L.S. III"/>
            <person name="Thomashow L.S."/>
            <person name="Loper J.E."/>
        </authorList>
    </citation>
    <scope>NUCLEOTIDE SEQUENCE [LARGE SCALE GENOMIC DNA]</scope>
    <source>
        <strain>ATCC BAA-477 / NRRL B-23932 / Pf-5</strain>
    </source>
</reference>
<dbReference type="EC" id="7.2.2.7" evidence="1"/>
<dbReference type="EMBL" id="CP000076">
    <property type="protein sequence ID" value="AAY92310.1"/>
    <property type="molecule type" value="Genomic_DNA"/>
</dbReference>
<dbReference type="RefSeq" id="WP_011061328.1">
    <property type="nucleotide sequence ID" value="NC_004129.6"/>
</dbReference>
<dbReference type="SMR" id="Q4KC87"/>
<dbReference type="STRING" id="220664.PFL_3040"/>
<dbReference type="KEGG" id="pfl:PFL_3040"/>
<dbReference type="PATRIC" id="fig|220664.5.peg.3099"/>
<dbReference type="eggNOG" id="COG3842">
    <property type="taxonomic scope" value="Bacteria"/>
</dbReference>
<dbReference type="HOGENOM" id="CLU_000604_1_1_6"/>
<dbReference type="Proteomes" id="UP000008540">
    <property type="component" value="Chromosome"/>
</dbReference>
<dbReference type="GO" id="GO:0043190">
    <property type="term" value="C:ATP-binding cassette (ABC) transporter complex"/>
    <property type="evidence" value="ECO:0007669"/>
    <property type="project" value="InterPro"/>
</dbReference>
<dbReference type="GO" id="GO:0015408">
    <property type="term" value="F:ABC-type ferric iron transporter activity"/>
    <property type="evidence" value="ECO:0007669"/>
    <property type="project" value="UniProtKB-EC"/>
</dbReference>
<dbReference type="GO" id="GO:0005524">
    <property type="term" value="F:ATP binding"/>
    <property type="evidence" value="ECO:0007669"/>
    <property type="project" value="UniProtKB-KW"/>
</dbReference>
<dbReference type="GO" id="GO:0016887">
    <property type="term" value="F:ATP hydrolysis activity"/>
    <property type="evidence" value="ECO:0007669"/>
    <property type="project" value="InterPro"/>
</dbReference>
<dbReference type="CDD" id="cd03259">
    <property type="entry name" value="ABC_Carb_Solutes_like"/>
    <property type="match status" value="1"/>
</dbReference>
<dbReference type="FunFam" id="3.40.50.300:FF:000425">
    <property type="entry name" value="Probable ABC transporter, ATP-binding subunit"/>
    <property type="match status" value="1"/>
</dbReference>
<dbReference type="Gene3D" id="2.40.50.450">
    <property type="match status" value="1"/>
</dbReference>
<dbReference type="Gene3D" id="3.40.50.300">
    <property type="entry name" value="P-loop containing nucleotide triphosphate hydrolases"/>
    <property type="match status" value="1"/>
</dbReference>
<dbReference type="InterPro" id="IPR003593">
    <property type="entry name" value="AAA+_ATPase"/>
</dbReference>
<dbReference type="InterPro" id="IPR050093">
    <property type="entry name" value="ABC_SmlMolc_Importer"/>
</dbReference>
<dbReference type="InterPro" id="IPR003439">
    <property type="entry name" value="ABC_transporter-like_ATP-bd"/>
</dbReference>
<dbReference type="InterPro" id="IPR017871">
    <property type="entry name" value="ABC_transporter-like_CS"/>
</dbReference>
<dbReference type="InterPro" id="IPR015853">
    <property type="entry name" value="ABC_transpr_FbpC"/>
</dbReference>
<dbReference type="InterPro" id="IPR008995">
    <property type="entry name" value="Mo/tungstate-bd_C_term_dom"/>
</dbReference>
<dbReference type="InterPro" id="IPR027417">
    <property type="entry name" value="P-loop_NTPase"/>
</dbReference>
<dbReference type="InterPro" id="IPR013611">
    <property type="entry name" value="Transp-assoc_OB_typ2"/>
</dbReference>
<dbReference type="PANTHER" id="PTHR42781:SF5">
    <property type="entry name" value="PUTRESCINE TRANSPORT ATP-BINDING PROTEIN POTG"/>
    <property type="match status" value="1"/>
</dbReference>
<dbReference type="PANTHER" id="PTHR42781">
    <property type="entry name" value="SPERMIDINE/PUTRESCINE IMPORT ATP-BINDING PROTEIN POTA"/>
    <property type="match status" value="1"/>
</dbReference>
<dbReference type="Pfam" id="PF00005">
    <property type="entry name" value="ABC_tran"/>
    <property type="match status" value="1"/>
</dbReference>
<dbReference type="Pfam" id="PF08402">
    <property type="entry name" value="TOBE_2"/>
    <property type="match status" value="1"/>
</dbReference>
<dbReference type="SMART" id="SM00382">
    <property type="entry name" value="AAA"/>
    <property type="match status" value="1"/>
</dbReference>
<dbReference type="SUPFAM" id="SSF50331">
    <property type="entry name" value="MOP-like"/>
    <property type="match status" value="1"/>
</dbReference>
<dbReference type="SUPFAM" id="SSF52540">
    <property type="entry name" value="P-loop containing nucleoside triphosphate hydrolases"/>
    <property type="match status" value="1"/>
</dbReference>
<dbReference type="PROSITE" id="PS00211">
    <property type="entry name" value="ABC_TRANSPORTER_1"/>
    <property type="match status" value="1"/>
</dbReference>
<dbReference type="PROSITE" id="PS50893">
    <property type="entry name" value="ABC_TRANSPORTER_2"/>
    <property type="match status" value="1"/>
</dbReference>
<dbReference type="PROSITE" id="PS51242">
    <property type="entry name" value="FBPC"/>
    <property type="match status" value="1"/>
</dbReference>
<gene>
    <name evidence="1" type="primary">fbpC</name>
    <name type="ordered locus">PFL_3040</name>
</gene>
<evidence type="ECO:0000255" key="1">
    <source>
        <dbReference type="HAMAP-Rule" id="MF_01706"/>
    </source>
</evidence>
<keyword id="KW-0067">ATP-binding</keyword>
<keyword id="KW-0997">Cell inner membrane</keyword>
<keyword id="KW-1003">Cell membrane</keyword>
<keyword id="KW-0406">Ion transport</keyword>
<keyword id="KW-0408">Iron</keyword>
<keyword id="KW-0410">Iron transport</keyword>
<keyword id="KW-0472">Membrane</keyword>
<keyword id="KW-0547">Nucleotide-binding</keyword>
<keyword id="KW-1278">Translocase</keyword>
<keyword id="KW-0813">Transport</keyword>
<sequence length="354" mass="37160">MNALELHAVHKSFGGVPAVQDISLSMPAGSRTAIVGPSGSGKTTLLRMIAGFEFPDRGRISLNGQVLADAQGAVPAHQRLIGYVPQDGALFPHLNVAANIGFGLTGKNPQRQQRIAELLDMVALDSSLAARWPHELSGGQQQRVALARALAQRPRLMLLDEPFSALDTGLRASMRKAVARLLAEAGVTTILVTHDQAEALSFADQLAVMRQGRLVQAGAPLELYQHPRDAQTALFLGEAVLLPAQLDQGLAQCDLGQVPIRERSLKGPARIMLRPEQLLVLADDGDGAGSCPGVVRDCDFAGNTCTLSIGVAGAGGHEQLVPVRSSGLHALPVGSRVRIRTLGHAHVLGAAPGA</sequence>
<proteinExistence type="inferred from homology"/>
<feature type="chain" id="PRO_0000272042" description="Fe(3+) ions import ATP-binding protein FbpC">
    <location>
        <begin position="1"/>
        <end position="354"/>
    </location>
</feature>
<feature type="domain" description="ABC transporter" evidence="1">
    <location>
        <begin position="4"/>
        <end position="236"/>
    </location>
</feature>
<feature type="binding site" evidence="1">
    <location>
        <begin position="36"/>
        <end position="43"/>
    </location>
    <ligand>
        <name>ATP</name>
        <dbReference type="ChEBI" id="CHEBI:30616"/>
    </ligand>
</feature>
<comment type="function">
    <text evidence="1">Part of the ABC transporter complex FbpABC involved in Fe(3+) ions import. Responsible for energy coupling to the transport system.</text>
</comment>
<comment type="catalytic activity">
    <reaction evidence="1">
        <text>Fe(3+)(out) + ATP + H2O = Fe(3+)(in) + ADP + phosphate + H(+)</text>
        <dbReference type="Rhea" id="RHEA:12332"/>
        <dbReference type="ChEBI" id="CHEBI:15377"/>
        <dbReference type="ChEBI" id="CHEBI:15378"/>
        <dbReference type="ChEBI" id="CHEBI:29034"/>
        <dbReference type="ChEBI" id="CHEBI:30616"/>
        <dbReference type="ChEBI" id="CHEBI:43474"/>
        <dbReference type="ChEBI" id="CHEBI:456216"/>
        <dbReference type="EC" id="7.2.2.7"/>
    </reaction>
</comment>
<comment type="subunit">
    <text evidence="1">The complex is composed of two ATP-binding proteins (FbpC), two transmembrane proteins (FbpB) and a solute-binding protein (FbpA).</text>
</comment>
<comment type="subcellular location">
    <subcellularLocation>
        <location evidence="1">Cell inner membrane</location>
        <topology evidence="1">Peripheral membrane protein</topology>
    </subcellularLocation>
</comment>
<comment type="similarity">
    <text evidence="1">Belongs to the ABC transporter superfamily. Fe(3+) ion importer (TC 3.A.1.10) family.</text>
</comment>
<name>FBPC_PSEF5</name>
<protein>
    <recommendedName>
        <fullName evidence="1">Fe(3+) ions import ATP-binding protein FbpC</fullName>
        <ecNumber evidence="1">7.2.2.7</ecNumber>
    </recommendedName>
</protein>